<proteinExistence type="inferred from homology"/>
<name>DCYD_YERPN</name>
<keyword id="KW-0456">Lyase</keyword>
<keyword id="KW-0663">Pyridoxal phosphate</keyword>
<sequence length="330" mass="35039">MTLQQKLTQFPRLDLVGNATPLEKLSRLSDYLGREIYIKRDDVTPVALGGNKLRKLEFLAADALRQGADTLVTAGAIQSNHVRQTAAVAAKLGLHCVALLENPIGTEQANYLTNGNRLLLDLFNVDVVMCEALNDPNQQLAELATRVEAQGFRPYVVPIGGSNALGALGYVQCSLEIAAQAAGNVAFSSVVVASGSAGTHAGLAVGLQQLLPDAELIGVTVSRSADEQRPKVAQIQQALATSLGMTDPLAKITLWDSYFAPQYGMPNEEGIAAIKLLARLEGILLDPVYTGKAMAGLLDGIEQQKFCDKGPILFIHTGGAPALFAYHPQV</sequence>
<accession>Q1CHC4</accession>
<accession>C4GUH1</accession>
<comment type="function">
    <text evidence="1">Catalyzes the alpha,beta-elimination reaction of D-cysteine and of several D-cysteine derivatives. It could be a defense mechanism against D-cysteine.</text>
</comment>
<comment type="catalytic activity">
    <reaction evidence="1">
        <text>D-cysteine + H2O = hydrogen sulfide + pyruvate + NH4(+) + H(+)</text>
        <dbReference type="Rhea" id="RHEA:11268"/>
        <dbReference type="ChEBI" id="CHEBI:15361"/>
        <dbReference type="ChEBI" id="CHEBI:15377"/>
        <dbReference type="ChEBI" id="CHEBI:15378"/>
        <dbReference type="ChEBI" id="CHEBI:28938"/>
        <dbReference type="ChEBI" id="CHEBI:29919"/>
        <dbReference type="ChEBI" id="CHEBI:35236"/>
        <dbReference type="EC" id="4.4.1.15"/>
    </reaction>
</comment>
<comment type="cofactor">
    <cofactor evidence="1">
        <name>pyridoxal 5'-phosphate</name>
        <dbReference type="ChEBI" id="CHEBI:597326"/>
    </cofactor>
</comment>
<comment type="subunit">
    <text evidence="1">Homodimer.</text>
</comment>
<comment type="similarity">
    <text evidence="1">Belongs to the ACC deaminase/D-cysteine desulfhydrase family.</text>
</comment>
<feature type="chain" id="PRO_1000064271" description="D-cysteine desulfhydrase">
    <location>
        <begin position="1"/>
        <end position="330"/>
    </location>
</feature>
<feature type="modified residue" description="N6-(pyridoxal phosphate)lysine" evidence="1">
    <location>
        <position position="52"/>
    </location>
</feature>
<protein>
    <recommendedName>
        <fullName evidence="1">D-cysteine desulfhydrase</fullName>
        <ecNumber evidence="1">4.4.1.15</ecNumber>
    </recommendedName>
</protein>
<reference key="1">
    <citation type="journal article" date="2006" name="J. Bacteriol.">
        <title>Complete genome sequence of Yersinia pestis strains Antiqua and Nepal516: evidence of gene reduction in an emerging pathogen.</title>
        <authorList>
            <person name="Chain P.S.G."/>
            <person name="Hu P."/>
            <person name="Malfatti S.A."/>
            <person name="Radnedge L."/>
            <person name="Larimer F."/>
            <person name="Vergez L.M."/>
            <person name="Worsham P."/>
            <person name="Chu M.C."/>
            <person name="Andersen G.L."/>
        </authorList>
    </citation>
    <scope>NUCLEOTIDE SEQUENCE [LARGE SCALE GENOMIC DNA]</scope>
    <source>
        <strain>Nepal516</strain>
    </source>
</reference>
<reference key="2">
    <citation type="submission" date="2009-04" db="EMBL/GenBank/DDBJ databases">
        <title>Yersinia pestis Nepal516A whole genome shotgun sequencing project.</title>
        <authorList>
            <person name="Plunkett G. III"/>
            <person name="Anderson B.D."/>
            <person name="Baumler D.J."/>
            <person name="Burland V."/>
            <person name="Cabot E.L."/>
            <person name="Glasner J.D."/>
            <person name="Mau B."/>
            <person name="Neeno-Eckwall E."/>
            <person name="Perna N.T."/>
            <person name="Munk A.C."/>
            <person name="Tapia R."/>
            <person name="Green L.D."/>
            <person name="Rogers Y.C."/>
            <person name="Detter J.C."/>
            <person name="Bruce D.C."/>
            <person name="Brettin T.S."/>
        </authorList>
    </citation>
    <scope>NUCLEOTIDE SEQUENCE [LARGE SCALE GENOMIC DNA]</scope>
    <source>
        <strain>Nepal516</strain>
    </source>
</reference>
<organism>
    <name type="scientific">Yersinia pestis bv. Antiqua (strain Nepal516)</name>
    <dbReference type="NCBI Taxonomy" id="377628"/>
    <lineage>
        <taxon>Bacteria</taxon>
        <taxon>Pseudomonadati</taxon>
        <taxon>Pseudomonadota</taxon>
        <taxon>Gammaproteobacteria</taxon>
        <taxon>Enterobacterales</taxon>
        <taxon>Yersiniaceae</taxon>
        <taxon>Yersinia</taxon>
    </lineage>
</organism>
<evidence type="ECO:0000255" key="1">
    <source>
        <dbReference type="HAMAP-Rule" id="MF_01045"/>
    </source>
</evidence>
<gene>
    <name evidence="1" type="primary">dcyD</name>
    <name type="ordered locus">YPN_2278</name>
    <name type="ORF">YP516_2560</name>
</gene>
<dbReference type="EC" id="4.4.1.15" evidence="1"/>
<dbReference type="EMBL" id="CP000305">
    <property type="protein sequence ID" value="ABG18606.1"/>
    <property type="molecule type" value="Genomic_DNA"/>
</dbReference>
<dbReference type="EMBL" id="ACNQ01000013">
    <property type="protein sequence ID" value="EEO76358.1"/>
    <property type="molecule type" value="Genomic_DNA"/>
</dbReference>
<dbReference type="RefSeq" id="WP_002227959.1">
    <property type="nucleotide sequence ID" value="NZ_ACNQ01000013.1"/>
</dbReference>
<dbReference type="SMR" id="Q1CHC4"/>
<dbReference type="KEGG" id="ypn:YPN_2278"/>
<dbReference type="HOGENOM" id="CLU_048897_1_0_6"/>
<dbReference type="Proteomes" id="UP000008936">
    <property type="component" value="Chromosome"/>
</dbReference>
<dbReference type="GO" id="GO:0019148">
    <property type="term" value="F:D-cysteine desulfhydrase activity"/>
    <property type="evidence" value="ECO:0007669"/>
    <property type="project" value="UniProtKB-UniRule"/>
</dbReference>
<dbReference type="GO" id="GO:0046416">
    <property type="term" value="P:D-amino acid metabolic process"/>
    <property type="evidence" value="ECO:0007669"/>
    <property type="project" value="UniProtKB-UniRule"/>
</dbReference>
<dbReference type="CDD" id="cd06449">
    <property type="entry name" value="ACCD"/>
    <property type="match status" value="1"/>
</dbReference>
<dbReference type="FunFam" id="3.40.50.1100:FF:000017">
    <property type="entry name" value="D-cysteine desulfhydrase"/>
    <property type="match status" value="1"/>
</dbReference>
<dbReference type="Gene3D" id="3.40.50.1100">
    <property type="match status" value="2"/>
</dbReference>
<dbReference type="HAMAP" id="MF_01045">
    <property type="entry name" value="D_Cys_desulfhydr"/>
    <property type="match status" value="1"/>
</dbReference>
<dbReference type="InterPro" id="IPR027278">
    <property type="entry name" value="ACCD_DCysDesulf"/>
</dbReference>
<dbReference type="InterPro" id="IPR005966">
    <property type="entry name" value="D-Cys_desShydrase"/>
</dbReference>
<dbReference type="InterPro" id="IPR023702">
    <property type="entry name" value="D_Cys_desulphydr_bac"/>
</dbReference>
<dbReference type="InterPro" id="IPR001926">
    <property type="entry name" value="TrpB-like_PALP"/>
</dbReference>
<dbReference type="InterPro" id="IPR036052">
    <property type="entry name" value="TrpB-like_PALP_sf"/>
</dbReference>
<dbReference type="NCBIfam" id="TIGR01275">
    <property type="entry name" value="ACC_deam_rel"/>
    <property type="match status" value="1"/>
</dbReference>
<dbReference type="NCBIfam" id="NF003030">
    <property type="entry name" value="PRK03910.1-3"/>
    <property type="match status" value="1"/>
</dbReference>
<dbReference type="NCBIfam" id="NF003032">
    <property type="entry name" value="PRK03910.1-5"/>
    <property type="match status" value="1"/>
</dbReference>
<dbReference type="PANTHER" id="PTHR43780">
    <property type="entry name" value="1-AMINOCYCLOPROPANE-1-CARBOXYLATE DEAMINASE-RELATED"/>
    <property type="match status" value="1"/>
</dbReference>
<dbReference type="PANTHER" id="PTHR43780:SF2">
    <property type="entry name" value="1-AMINOCYCLOPROPANE-1-CARBOXYLATE DEAMINASE-RELATED"/>
    <property type="match status" value="1"/>
</dbReference>
<dbReference type="Pfam" id="PF00291">
    <property type="entry name" value="PALP"/>
    <property type="match status" value="1"/>
</dbReference>
<dbReference type="PIRSF" id="PIRSF006278">
    <property type="entry name" value="ACCD_DCysDesulf"/>
    <property type="match status" value="1"/>
</dbReference>
<dbReference type="SUPFAM" id="SSF53686">
    <property type="entry name" value="Tryptophan synthase beta subunit-like PLP-dependent enzymes"/>
    <property type="match status" value="1"/>
</dbReference>